<keyword id="KW-0007">Acetylation</keyword>
<keyword id="KW-0963">Cytoplasm</keyword>
<keyword id="KW-0206">Cytoskeleton</keyword>
<keyword id="KW-0539">Nucleus</keyword>
<keyword id="KW-0597">Phosphoprotein</keyword>
<keyword id="KW-1185">Reference proteome</keyword>
<keyword id="KW-0690">Ribosome biogenesis</keyword>
<reference key="1">
    <citation type="submission" date="2005-09" db="EMBL/GenBank/DDBJ databases">
        <authorList>
            <consortium name="NIH - Mammalian Gene Collection (MGC) project"/>
        </authorList>
    </citation>
    <scope>NUCLEOTIDE SEQUENCE [LARGE SCALE MRNA]</scope>
    <source>
        <strain>Hereford</strain>
        <tissue>Ascending colon</tissue>
    </source>
</reference>
<protein>
    <recommendedName>
        <fullName>Ribosome maturation protein SBDS</fullName>
    </recommendedName>
    <alternativeName>
        <fullName>Shwachman-Bodian-Diamond syndrome protein homolog</fullName>
    </alternativeName>
</protein>
<comment type="function">
    <text evidence="1">Required for the assembly of mature ribosomes and ribosome biogenesis. Together with EFL1, triggers the GTP-dependent release of EIF6 from 60S pre-ribosomes in the cytoplasm, thereby activating ribosomes for translation competence by allowing 80S ribosome assembly and facilitating EIF6 recycling to the nucleus, where it is required for 60S rRNA processing and nuclear export. Required for normal levels of protein synthesis. May play a role in cellular stress resistance. May play a role in cellular response to DNA damage. May play a role in cell proliferation (By similarity).</text>
</comment>
<comment type="subunit">
    <text evidence="1 3">Associates with the 60S ribosomal subunit. Interacts with NPM1, RPA1 and PRKDC. May interact with NIP7 (By similarity). Interacts with CLN3 (By similarity).</text>
</comment>
<comment type="subcellular location">
    <subcellularLocation>
        <location evidence="1">Cytoplasm</location>
    </subcellularLocation>
    <subcellularLocation>
        <location evidence="1">Nucleus</location>
        <location evidence="1">Nucleolus</location>
    </subcellularLocation>
    <subcellularLocation>
        <location evidence="1">Nucleus</location>
        <location evidence="1">Nucleoplasm</location>
    </subcellularLocation>
    <subcellularLocation>
        <location evidence="1">Cytoplasm</location>
        <location evidence="1">Cytoskeleton</location>
        <location evidence="1">Spindle</location>
    </subcellularLocation>
    <text evidence="1">Primarily detected in the cytoplasm, and at low levels in nucleus. Detected in the nucleolus during G1 and G2 phase of the cell cycle, and diffusely distributed in the nucleus during S phase. Detected at the mitotic spindle. Colocalizes with the microtubule organizing center during interphase (By similarity).</text>
</comment>
<comment type="similarity">
    <text evidence="4">Belongs to the SDO1/SBDS family.</text>
</comment>
<gene>
    <name type="primary">SBDS</name>
</gene>
<sequence length="250" mass="28718">MSIFTPTNQIRLTNVAVVRMKRAGKRFEIACYKNKVVGWRSGVEKDLDEVLQTHSVFVNVSKGQVAKKEDLISAFGTDDQTEICKQILTKGEVQVSDKERHTQLEQMFRDIATIVADKCVNPETKRPYTVILIERAMKDIHYSVKPNKSTKQQALEVIKQLKEKMKIERAHMRLRFILPVNEGKKLKEKLKPLIKVIESEDYGQQLEIVCLIDPGCFREVDELIKKETKGKGSLEVLSLKDVEEGDEKFE</sequence>
<organism>
    <name type="scientific">Bos taurus</name>
    <name type="common">Bovine</name>
    <dbReference type="NCBI Taxonomy" id="9913"/>
    <lineage>
        <taxon>Eukaryota</taxon>
        <taxon>Metazoa</taxon>
        <taxon>Chordata</taxon>
        <taxon>Craniata</taxon>
        <taxon>Vertebrata</taxon>
        <taxon>Euteleostomi</taxon>
        <taxon>Mammalia</taxon>
        <taxon>Eutheria</taxon>
        <taxon>Laurasiatheria</taxon>
        <taxon>Artiodactyla</taxon>
        <taxon>Ruminantia</taxon>
        <taxon>Pecora</taxon>
        <taxon>Bovidae</taxon>
        <taxon>Bovinae</taxon>
        <taxon>Bos</taxon>
    </lineage>
</organism>
<feature type="initiator methionine" description="Removed" evidence="3">
    <location>
        <position position="1"/>
    </location>
</feature>
<feature type="chain" id="PRO_0000245577" description="Ribosome maturation protein SBDS">
    <location>
        <begin position="2"/>
        <end position="250"/>
    </location>
</feature>
<feature type="modified residue" description="N-acetylserine" evidence="3">
    <location>
        <position position="2"/>
    </location>
</feature>
<feature type="modified residue" description="Phosphoserine" evidence="2">
    <location>
        <position position="238"/>
    </location>
</feature>
<proteinExistence type="evidence at transcript level"/>
<dbReference type="EMBL" id="BC104585">
    <property type="protein sequence ID" value="AAI04586.1"/>
    <property type="molecule type" value="mRNA"/>
</dbReference>
<dbReference type="RefSeq" id="NP_001029611.1">
    <property type="nucleotide sequence ID" value="NM_001034439.1"/>
</dbReference>
<dbReference type="BMRB" id="Q3SWZ6"/>
<dbReference type="SMR" id="Q3SWZ6"/>
<dbReference type="FunCoup" id="Q3SWZ6">
    <property type="interactions" value="3056"/>
</dbReference>
<dbReference type="STRING" id="9913.ENSBTAP00000005296"/>
<dbReference type="PaxDb" id="9913-ENSBTAP00000005296"/>
<dbReference type="PeptideAtlas" id="Q3SWZ6"/>
<dbReference type="Ensembl" id="ENSBTAT00000005296.3">
    <property type="protein sequence ID" value="ENSBTAP00000005296.2"/>
    <property type="gene ID" value="ENSBTAG00000004051.4"/>
</dbReference>
<dbReference type="GeneID" id="513237"/>
<dbReference type="KEGG" id="bta:513237"/>
<dbReference type="CTD" id="51119"/>
<dbReference type="VEuPathDB" id="HostDB:ENSBTAG00000004051"/>
<dbReference type="VGNC" id="VGNC:34304">
    <property type="gene designation" value="SBDS"/>
</dbReference>
<dbReference type="eggNOG" id="KOG2917">
    <property type="taxonomic scope" value="Eukaryota"/>
</dbReference>
<dbReference type="GeneTree" id="ENSGT00390000008135"/>
<dbReference type="HOGENOM" id="CLU_043216_1_1_1"/>
<dbReference type="InParanoid" id="Q3SWZ6"/>
<dbReference type="OMA" id="AVNPQMD"/>
<dbReference type="OrthoDB" id="10253092at2759"/>
<dbReference type="TreeFam" id="TF300881"/>
<dbReference type="Proteomes" id="UP000009136">
    <property type="component" value="Chromosome 25"/>
</dbReference>
<dbReference type="Bgee" id="ENSBTAG00000004051">
    <property type="expression patterns" value="Expressed in subcutaneous adipose tissue and 104 other cell types or tissues"/>
</dbReference>
<dbReference type="GO" id="GO:0005737">
    <property type="term" value="C:cytoplasm"/>
    <property type="evidence" value="ECO:0000250"/>
    <property type="project" value="UniProtKB"/>
</dbReference>
<dbReference type="GO" id="GO:0005829">
    <property type="term" value="C:cytosol"/>
    <property type="evidence" value="ECO:0007669"/>
    <property type="project" value="Ensembl"/>
</dbReference>
<dbReference type="GO" id="GO:0005730">
    <property type="term" value="C:nucleolus"/>
    <property type="evidence" value="ECO:0000250"/>
    <property type="project" value="UniProtKB"/>
</dbReference>
<dbReference type="GO" id="GO:0005654">
    <property type="term" value="C:nucleoplasm"/>
    <property type="evidence" value="ECO:0007669"/>
    <property type="project" value="UniProtKB-SubCell"/>
</dbReference>
<dbReference type="GO" id="GO:0000922">
    <property type="term" value="C:spindle pole"/>
    <property type="evidence" value="ECO:0000250"/>
    <property type="project" value="UniProtKB"/>
</dbReference>
<dbReference type="GO" id="GO:0008017">
    <property type="term" value="F:microtubule binding"/>
    <property type="evidence" value="ECO:0000250"/>
    <property type="project" value="UniProtKB"/>
</dbReference>
<dbReference type="GO" id="GO:0043022">
    <property type="term" value="F:ribosome binding"/>
    <property type="evidence" value="ECO:0000250"/>
    <property type="project" value="UniProtKB"/>
</dbReference>
<dbReference type="GO" id="GO:0019843">
    <property type="term" value="F:rRNA binding"/>
    <property type="evidence" value="ECO:0000250"/>
    <property type="project" value="UniProtKB"/>
</dbReference>
<dbReference type="GO" id="GO:0048539">
    <property type="term" value="P:bone marrow development"/>
    <property type="evidence" value="ECO:0000250"/>
    <property type="project" value="UniProtKB"/>
</dbReference>
<dbReference type="GO" id="GO:0030282">
    <property type="term" value="P:bone mineralization"/>
    <property type="evidence" value="ECO:0000250"/>
    <property type="project" value="UniProtKB"/>
</dbReference>
<dbReference type="GO" id="GO:0042256">
    <property type="term" value="P:cytosolic ribosome assembly"/>
    <property type="evidence" value="ECO:0000250"/>
    <property type="project" value="UniProtKB"/>
</dbReference>
<dbReference type="GO" id="GO:0002244">
    <property type="term" value="P:hematopoietic progenitor cell differentiation"/>
    <property type="evidence" value="ECO:0000250"/>
    <property type="project" value="UniProtKB"/>
</dbReference>
<dbReference type="GO" id="GO:0001833">
    <property type="term" value="P:inner cell mass cell proliferation"/>
    <property type="evidence" value="ECO:0007669"/>
    <property type="project" value="Ensembl"/>
</dbReference>
<dbReference type="GO" id="GO:0030595">
    <property type="term" value="P:leukocyte chemotaxis"/>
    <property type="evidence" value="ECO:0000250"/>
    <property type="project" value="UniProtKB"/>
</dbReference>
<dbReference type="GO" id="GO:0007052">
    <property type="term" value="P:mitotic spindle organization"/>
    <property type="evidence" value="ECO:0000250"/>
    <property type="project" value="UniProtKB"/>
</dbReference>
<dbReference type="GO" id="GO:0006364">
    <property type="term" value="P:rRNA processing"/>
    <property type="evidence" value="ECO:0000250"/>
    <property type="project" value="UniProtKB"/>
</dbReference>
<dbReference type="FunFam" id="3.30.70.240:FF:000009">
    <property type="entry name" value="SBDS ribosome maturation factor"/>
    <property type="match status" value="1"/>
</dbReference>
<dbReference type="FunFam" id="1.10.10.900:FF:000001">
    <property type="entry name" value="SBDS, ribosome maturation factor"/>
    <property type="match status" value="1"/>
</dbReference>
<dbReference type="FunFam" id="3.30.1250.10:FF:000001">
    <property type="entry name" value="SBDS, ribosome maturation factor"/>
    <property type="match status" value="1"/>
</dbReference>
<dbReference type="Gene3D" id="3.30.70.240">
    <property type="match status" value="1"/>
</dbReference>
<dbReference type="Gene3D" id="3.30.1250.10">
    <property type="entry name" value="Ribosome maturation protein SBDS, N-terminal domain"/>
    <property type="match status" value="1"/>
</dbReference>
<dbReference type="Gene3D" id="1.10.10.900">
    <property type="entry name" value="SBDS protein C-terminal domain, subdomain 1"/>
    <property type="match status" value="1"/>
</dbReference>
<dbReference type="InterPro" id="IPR018023">
    <property type="entry name" value="Ribosome_mat_SBDS_CS"/>
</dbReference>
<dbReference type="InterPro" id="IPR036786">
    <property type="entry name" value="Ribosome_mat_SBDS_N_sf"/>
</dbReference>
<dbReference type="InterPro" id="IPR002140">
    <property type="entry name" value="Sdo1/SBDS"/>
</dbReference>
<dbReference type="InterPro" id="IPR039100">
    <property type="entry name" value="Sdo1/SBDS-like"/>
</dbReference>
<dbReference type="InterPro" id="IPR046928">
    <property type="entry name" value="SDO1/SBDS_C"/>
</dbReference>
<dbReference type="InterPro" id="IPR018978">
    <property type="entry name" value="SDO1/SBDS_central"/>
</dbReference>
<dbReference type="InterPro" id="IPR037188">
    <property type="entry name" value="Sdo1/SBDS_central_sf"/>
</dbReference>
<dbReference type="InterPro" id="IPR019783">
    <property type="entry name" value="SDO1/SBDS_N"/>
</dbReference>
<dbReference type="NCBIfam" id="TIGR00291">
    <property type="entry name" value="RNA_SBDS"/>
    <property type="match status" value="1"/>
</dbReference>
<dbReference type="PANTHER" id="PTHR10927">
    <property type="entry name" value="RIBOSOME MATURATION PROTEIN SBDS"/>
    <property type="match status" value="1"/>
</dbReference>
<dbReference type="PANTHER" id="PTHR10927:SF6">
    <property type="entry name" value="RIBOSOME MATURATION PROTEIN SBDS"/>
    <property type="match status" value="1"/>
</dbReference>
<dbReference type="Pfam" id="PF20268">
    <property type="entry name" value="SBDS_C"/>
    <property type="match status" value="1"/>
</dbReference>
<dbReference type="Pfam" id="PF09377">
    <property type="entry name" value="SBDS_domain_II"/>
    <property type="match status" value="1"/>
</dbReference>
<dbReference type="Pfam" id="PF01172">
    <property type="entry name" value="SBDS_N"/>
    <property type="match status" value="1"/>
</dbReference>
<dbReference type="SUPFAM" id="SSF89895">
    <property type="entry name" value="FYSH domain"/>
    <property type="match status" value="1"/>
</dbReference>
<dbReference type="SUPFAM" id="SSF109728">
    <property type="entry name" value="Hypothetical protein AF0491, middle domain"/>
    <property type="match status" value="1"/>
</dbReference>
<dbReference type="PROSITE" id="PS01267">
    <property type="entry name" value="UPF0023"/>
    <property type="match status" value="1"/>
</dbReference>
<name>SBDS_BOVIN</name>
<accession>Q3SWZ6</accession>
<evidence type="ECO:0000250" key="1"/>
<evidence type="ECO:0000250" key="2">
    <source>
        <dbReference type="UniProtKB" id="P70122"/>
    </source>
</evidence>
<evidence type="ECO:0000250" key="3">
    <source>
        <dbReference type="UniProtKB" id="Q9Y3A5"/>
    </source>
</evidence>
<evidence type="ECO:0000305" key="4"/>